<geneLocation type="mitochondrion"/>
<protein>
    <recommendedName>
        <fullName>Cytochrome b</fullName>
    </recommendedName>
    <alternativeName>
        <fullName>Complex III subunit 3</fullName>
    </alternativeName>
    <alternativeName>
        <fullName>Complex III subunit III</fullName>
    </alternativeName>
    <alternativeName>
        <fullName>Cytochrome b-c1 complex subunit 3</fullName>
    </alternativeName>
    <alternativeName>
        <fullName>Ubiquinol-cytochrome-c reductase complex cytochrome b subunit</fullName>
    </alternativeName>
</protein>
<organism>
    <name type="scientific">Capra ibex</name>
    <name type="common">Ibex</name>
    <dbReference type="NCBI Taxonomy" id="72542"/>
    <lineage>
        <taxon>Eukaryota</taxon>
        <taxon>Metazoa</taxon>
        <taxon>Chordata</taxon>
        <taxon>Craniata</taxon>
        <taxon>Vertebrata</taxon>
        <taxon>Euteleostomi</taxon>
        <taxon>Mammalia</taxon>
        <taxon>Eutheria</taxon>
        <taxon>Laurasiatheria</taxon>
        <taxon>Artiodactyla</taxon>
        <taxon>Ruminantia</taxon>
        <taxon>Pecora</taxon>
        <taxon>Bovidae</taxon>
        <taxon>Caprinae</taxon>
        <taxon>Capra</taxon>
    </lineage>
</organism>
<sequence length="379" mass="42819">MTNIRKTHPLMKIVNNAFIDLPTPPNISSWWNFGSLLGTCLILQILTGLFLAMHYTSDTMTAFSSVAHICRDVNYGWIIRYMHANGASMFFICLFMHVGRGLYYGSYTFLETWNIGVILLFATMATAFMGYVLPWGQMSFWGATVITNLLSAIPYIGTNLVEWIWGGFSVDKATLTRFFAFHFILPFIITALAMVHLLFLHETGSNNPTGIPSDTDKIPFHPYYTIKDILGAMLLILVLMLLVLFTPDLLGDPDNYTPANPLNTPPHIKPEWYFLFAYAILRSIPNKLGGVLALILSILILVLVPFLHTSKQRSMMFRPISQCMFWVLVADLLTLTWIGGQPVEHPYIIIGQLASIMYFLTILVMMPAASTIENNLLKW</sequence>
<keyword id="KW-0249">Electron transport</keyword>
<keyword id="KW-0349">Heme</keyword>
<keyword id="KW-0408">Iron</keyword>
<keyword id="KW-0472">Membrane</keyword>
<keyword id="KW-0479">Metal-binding</keyword>
<keyword id="KW-0496">Mitochondrion</keyword>
<keyword id="KW-0999">Mitochondrion inner membrane</keyword>
<keyword id="KW-0679">Respiratory chain</keyword>
<keyword id="KW-0812">Transmembrane</keyword>
<keyword id="KW-1133">Transmembrane helix</keyword>
<keyword id="KW-0813">Transport</keyword>
<keyword id="KW-0830">Ubiquinone</keyword>
<accession>O78785</accession>
<comment type="function">
    <text evidence="2">Component of the ubiquinol-cytochrome c reductase complex (complex III or cytochrome b-c1 complex) that is part of the mitochondrial respiratory chain. The b-c1 complex mediates electron transfer from ubiquinol to cytochrome c. Contributes to the generation of a proton gradient across the mitochondrial membrane that is then used for ATP synthesis.</text>
</comment>
<comment type="cofactor">
    <cofactor evidence="2">
        <name>heme b</name>
        <dbReference type="ChEBI" id="CHEBI:60344"/>
    </cofactor>
    <text evidence="2">Binds 2 heme b groups non-covalently.</text>
</comment>
<comment type="subunit">
    <text evidence="2">The cytochrome bc1 complex contains 11 subunits: 3 respiratory subunits (MT-CYB, CYC1 and UQCRFS1), 2 core proteins (UQCRC1 and UQCRC2) and 6 low-molecular weight proteins (UQCRH/QCR6, UQCRB/QCR7, UQCRQ/QCR8, UQCR10/QCR9, UQCR11/QCR10 and a cleavage product of UQCRFS1). This cytochrome bc1 complex then forms a dimer.</text>
</comment>
<comment type="subcellular location">
    <subcellularLocation>
        <location evidence="2">Mitochondrion inner membrane</location>
        <topology evidence="2">Multi-pass membrane protein</topology>
    </subcellularLocation>
</comment>
<comment type="miscellaneous">
    <text evidence="1">Heme 1 (or BL or b562) is low-potential and absorbs at about 562 nm, and heme 2 (or BH or b566) is high-potential and absorbs at about 566 nm.</text>
</comment>
<comment type="similarity">
    <text evidence="3 4">Belongs to the cytochrome b family.</text>
</comment>
<comment type="caution">
    <text evidence="2">The full-length protein contains only eight transmembrane helices, not nine as predicted by bioinformatics tools.</text>
</comment>
<dbReference type="EMBL" id="AF034735">
    <property type="protein sequence ID" value="AAC31690.1"/>
    <property type="molecule type" value="Genomic_DNA"/>
</dbReference>
<dbReference type="RefSeq" id="YP_007625067.1">
    <property type="nucleotide sequence ID" value="NC_020623.1"/>
</dbReference>
<dbReference type="SMR" id="O78785"/>
<dbReference type="GeneID" id="14841613"/>
<dbReference type="CTD" id="4519"/>
<dbReference type="GO" id="GO:0005743">
    <property type="term" value="C:mitochondrial inner membrane"/>
    <property type="evidence" value="ECO:0007669"/>
    <property type="project" value="UniProtKB-SubCell"/>
</dbReference>
<dbReference type="GO" id="GO:0045275">
    <property type="term" value="C:respiratory chain complex III"/>
    <property type="evidence" value="ECO:0007669"/>
    <property type="project" value="InterPro"/>
</dbReference>
<dbReference type="GO" id="GO:0046872">
    <property type="term" value="F:metal ion binding"/>
    <property type="evidence" value="ECO:0007669"/>
    <property type="project" value="UniProtKB-KW"/>
</dbReference>
<dbReference type="GO" id="GO:0008121">
    <property type="term" value="F:ubiquinol-cytochrome-c reductase activity"/>
    <property type="evidence" value="ECO:0007669"/>
    <property type="project" value="InterPro"/>
</dbReference>
<dbReference type="GO" id="GO:0006122">
    <property type="term" value="P:mitochondrial electron transport, ubiquinol to cytochrome c"/>
    <property type="evidence" value="ECO:0007669"/>
    <property type="project" value="TreeGrafter"/>
</dbReference>
<dbReference type="CDD" id="cd00290">
    <property type="entry name" value="cytochrome_b_C"/>
    <property type="match status" value="1"/>
</dbReference>
<dbReference type="CDD" id="cd00284">
    <property type="entry name" value="Cytochrome_b_N"/>
    <property type="match status" value="1"/>
</dbReference>
<dbReference type="FunFam" id="1.20.810.10:FF:000002">
    <property type="entry name" value="Cytochrome b"/>
    <property type="match status" value="1"/>
</dbReference>
<dbReference type="Gene3D" id="1.20.810.10">
    <property type="entry name" value="Cytochrome Bc1 Complex, Chain C"/>
    <property type="match status" value="1"/>
</dbReference>
<dbReference type="InterPro" id="IPR005798">
    <property type="entry name" value="Cyt_b/b6_C"/>
</dbReference>
<dbReference type="InterPro" id="IPR036150">
    <property type="entry name" value="Cyt_b/b6_C_sf"/>
</dbReference>
<dbReference type="InterPro" id="IPR005797">
    <property type="entry name" value="Cyt_b/b6_N"/>
</dbReference>
<dbReference type="InterPro" id="IPR027387">
    <property type="entry name" value="Cytb/b6-like_sf"/>
</dbReference>
<dbReference type="InterPro" id="IPR030689">
    <property type="entry name" value="Cytochrome_b"/>
</dbReference>
<dbReference type="InterPro" id="IPR048260">
    <property type="entry name" value="Cytochrome_b_C_euk/bac"/>
</dbReference>
<dbReference type="InterPro" id="IPR048259">
    <property type="entry name" value="Cytochrome_b_N_euk/bac"/>
</dbReference>
<dbReference type="InterPro" id="IPR016174">
    <property type="entry name" value="Di-haem_cyt_TM"/>
</dbReference>
<dbReference type="PANTHER" id="PTHR19271">
    <property type="entry name" value="CYTOCHROME B"/>
    <property type="match status" value="1"/>
</dbReference>
<dbReference type="PANTHER" id="PTHR19271:SF16">
    <property type="entry name" value="CYTOCHROME B"/>
    <property type="match status" value="1"/>
</dbReference>
<dbReference type="Pfam" id="PF00032">
    <property type="entry name" value="Cytochrom_B_C"/>
    <property type="match status" value="1"/>
</dbReference>
<dbReference type="Pfam" id="PF00033">
    <property type="entry name" value="Cytochrome_B"/>
    <property type="match status" value="1"/>
</dbReference>
<dbReference type="PIRSF" id="PIRSF038885">
    <property type="entry name" value="COB"/>
    <property type="match status" value="1"/>
</dbReference>
<dbReference type="SUPFAM" id="SSF81648">
    <property type="entry name" value="a domain/subunit of cytochrome bc1 complex (Ubiquinol-cytochrome c reductase)"/>
    <property type="match status" value="1"/>
</dbReference>
<dbReference type="SUPFAM" id="SSF81342">
    <property type="entry name" value="Transmembrane di-heme cytochromes"/>
    <property type="match status" value="1"/>
</dbReference>
<dbReference type="PROSITE" id="PS51003">
    <property type="entry name" value="CYTB_CTER"/>
    <property type="match status" value="1"/>
</dbReference>
<dbReference type="PROSITE" id="PS51002">
    <property type="entry name" value="CYTB_NTER"/>
    <property type="match status" value="1"/>
</dbReference>
<gene>
    <name type="primary">MT-CYB</name>
    <name type="synonym">COB</name>
    <name type="synonym">CYTB</name>
    <name type="synonym">MTCYB</name>
</gene>
<feature type="chain" id="PRO_0000060726" description="Cytochrome b">
    <location>
        <begin position="1"/>
        <end position="379"/>
    </location>
</feature>
<feature type="transmembrane region" description="Helical" evidence="2">
    <location>
        <begin position="33"/>
        <end position="53"/>
    </location>
</feature>
<feature type="transmembrane region" description="Helical" evidence="2">
    <location>
        <begin position="77"/>
        <end position="98"/>
    </location>
</feature>
<feature type="transmembrane region" description="Helical" evidence="2">
    <location>
        <begin position="113"/>
        <end position="133"/>
    </location>
</feature>
<feature type="transmembrane region" description="Helical" evidence="2">
    <location>
        <begin position="178"/>
        <end position="198"/>
    </location>
</feature>
<feature type="transmembrane region" description="Helical" evidence="2">
    <location>
        <begin position="226"/>
        <end position="246"/>
    </location>
</feature>
<feature type="transmembrane region" description="Helical" evidence="2">
    <location>
        <begin position="288"/>
        <end position="308"/>
    </location>
</feature>
<feature type="transmembrane region" description="Helical" evidence="2">
    <location>
        <begin position="320"/>
        <end position="340"/>
    </location>
</feature>
<feature type="transmembrane region" description="Helical" evidence="2">
    <location>
        <begin position="347"/>
        <end position="367"/>
    </location>
</feature>
<feature type="binding site" description="axial binding residue" evidence="2">
    <location>
        <position position="83"/>
    </location>
    <ligand>
        <name>heme b</name>
        <dbReference type="ChEBI" id="CHEBI:60344"/>
        <label>b562</label>
    </ligand>
    <ligandPart>
        <name>Fe</name>
        <dbReference type="ChEBI" id="CHEBI:18248"/>
    </ligandPart>
</feature>
<feature type="binding site" description="axial binding residue" evidence="2">
    <location>
        <position position="97"/>
    </location>
    <ligand>
        <name>heme b</name>
        <dbReference type="ChEBI" id="CHEBI:60344"/>
        <label>b566</label>
    </ligand>
    <ligandPart>
        <name>Fe</name>
        <dbReference type="ChEBI" id="CHEBI:18248"/>
    </ligandPart>
</feature>
<feature type="binding site" description="axial binding residue" evidence="2">
    <location>
        <position position="182"/>
    </location>
    <ligand>
        <name>heme b</name>
        <dbReference type="ChEBI" id="CHEBI:60344"/>
        <label>b562</label>
    </ligand>
    <ligandPart>
        <name>Fe</name>
        <dbReference type="ChEBI" id="CHEBI:18248"/>
    </ligandPart>
</feature>
<feature type="binding site" description="axial binding residue" evidence="2">
    <location>
        <position position="196"/>
    </location>
    <ligand>
        <name>heme b</name>
        <dbReference type="ChEBI" id="CHEBI:60344"/>
        <label>b566</label>
    </ligand>
    <ligandPart>
        <name>Fe</name>
        <dbReference type="ChEBI" id="CHEBI:18248"/>
    </ligandPart>
</feature>
<feature type="binding site" evidence="2">
    <location>
        <position position="201"/>
    </location>
    <ligand>
        <name>a ubiquinone</name>
        <dbReference type="ChEBI" id="CHEBI:16389"/>
    </ligand>
</feature>
<proteinExistence type="inferred from homology"/>
<evidence type="ECO:0000250" key="1"/>
<evidence type="ECO:0000250" key="2">
    <source>
        <dbReference type="UniProtKB" id="P00157"/>
    </source>
</evidence>
<evidence type="ECO:0000255" key="3">
    <source>
        <dbReference type="PROSITE-ProRule" id="PRU00967"/>
    </source>
</evidence>
<evidence type="ECO:0000255" key="4">
    <source>
        <dbReference type="PROSITE-ProRule" id="PRU00968"/>
    </source>
</evidence>
<name>CYB_CAPIB</name>
<reference key="1">
    <citation type="journal article" date="1998" name="J. Mammal. Evol.">
        <title>Molecular systematics of the subfamily Caprinae (Artiodactyla, Bovidae) as determined from cytochrome b sequences.</title>
        <authorList>
            <person name="Hassanin A."/>
            <person name="Pasquet E."/>
            <person name="Vigne J.-D."/>
        </authorList>
    </citation>
    <scope>NUCLEOTIDE SEQUENCE [GENOMIC DNA]</scope>
</reference>